<reference key="1">
    <citation type="journal article" date="2007" name="PLoS Genet.">
        <title>Patterns and implications of gene gain and loss in the evolution of Prochlorococcus.</title>
        <authorList>
            <person name="Kettler G.C."/>
            <person name="Martiny A.C."/>
            <person name="Huang K."/>
            <person name="Zucker J."/>
            <person name="Coleman M.L."/>
            <person name="Rodrigue S."/>
            <person name="Chen F."/>
            <person name="Lapidus A."/>
            <person name="Ferriera S."/>
            <person name="Johnson J."/>
            <person name="Steglich C."/>
            <person name="Church G.M."/>
            <person name="Richardson P."/>
            <person name="Chisholm S.W."/>
        </authorList>
    </citation>
    <scope>NUCLEOTIDE SEQUENCE [LARGE SCALE GENOMIC DNA]</scope>
    <source>
        <strain>MIT 9303</strain>
    </source>
</reference>
<protein>
    <recommendedName>
        <fullName evidence="1">Glycine dehydrogenase (decarboxylating)</fullName>
        <ecNumber evidence="1">1.4.4.2</ecNumber>
    </recommendedName>
    <alternativeName>
        <fullName evidence="1">Glycine cleavage system P-protein</fullName>
    </alternativeName>
    <alternativeName>
        <fullName evidence="1">Glycine decarboxylase</fullName>
    </alternativeName>
    <alternativeName>
        <fullName evidence="1">Glycine dehydrogenase (aminomethyl-transferring)</fullName>
    </alternativeName>
</protein>
<name>GCSP_PROM3</name>
<keyword id="KW-0560">Oxidoreductase</keyword>
<keyword id="KW-0663">Pyridoxal phosphate</keyword>
<proteinExistence type="inferred from homology"/>
<dbReference type="EC" id="1.4.4.2" evidence="1"/>
<dbReference type="EMBL" id="CP000554">
    <property type="protein sequence ID" value="ABM79620.1"/>
    <property type="molecule type" value="Genomic_DNA"/>
</dbReference>
<dbReference type="RefSeq" id="WP_011827461.1">
    <property type="nucleotide sequence ID" value="NC_008820.1"/>
</dbReference>
<dbReference type="SMR" id="A2CDR0"/>
<dbReference type="STRING" id="59922.P9303_28901"/>
<dbReference type="KEGG" id="pmf:P9303_28901"/>
<dbReference type="HOGENOM" id="CLU_004620_3_2_3"/>
<dbReference type="BioCyc" id="PMAR59922:G1G80-2533-MONOMER"/>
<dbReference type="Proteomes" id="UP000002274">
    <property type="component" value="Chromosome"/>
</dbReference>
<dbReference type="GO" id="GO:0005829">
    <property type="term" value="C:cytosol"/>
    <property type="evidence" value="ECO:0007669"/>
    <property type="project" value="TreeGrafter"/>
</dbReference>
<dbReference type="GO" id="GO:0005960">
    <property type="term" value="C:glycine cleavage complex"/>
    <property type="evidence" value="ECO:0007669"/>
    <property type="project" value="TreeGrafter"/>
</dbReference>
<dbReference type="GO" id="GO:0016594">
    <property type="term" value="F:glycine binding"/>
    <property type="evidence" value="ECO:0007669"/>
    <property type="project" value="TreeGrafter"/>
</dbReference>
<dbReference type="GO" id="GO:0004375">
    <property type="term" value="F:glycine dehydrogenase (decarboxylating) activity"/>
    <property type="evidence" value="ECO:0007669"/>
    <property type="project" value="UniProtKB-EC"/>
</dbReference>
<dbReference type="GO" id="GO:0030170">
    <property type="term" value="F:pyridoxal phosphate binding"/>
    <property type="evidence" value="ECO:0007669"/>
    <property type="project" value="TreeGrafter"/>
</dbReference>
<dbReference type="GO" id="GO:0019464">
    <property type="term" value="P:glycine decarboxylation via glycine cleavage system"/>
    <property type="evidence" value="ECO:0007669"/>
    <property type="project" value="UniProtKB-UniRule"/>
</dbReference>
<dbReference type="CDD" id="cd00613">
    <property type="entry name" value="GDC-P"/>
    <property type="match status" value="1"/>
</dbReference>
<dbReference type="FunFam" id="3.90.1150.10:FF:000007">
    <property type="entry name" value="Glycine dehydrogenase (decarboxylating), mitochondrial"/>
    <property type="match status" value="1"/>
</dbReference>
<dbReference type="FunFam" id="3.40.640.10:FF:000007">
    <property type="entry name" value="glycine dehydrogenase (Decarboxylating), mitochondrial"/>
    <property type="match status" value="1"/>
</dbReference>
<dbReference type="Gene3D" id="3.90.1150.10">
    <property type="entry name" value="Aspartate Aminotransferase, domain 1"/>
    <property type="match status" value="2"/>
</dbReference>
<dbReference type="Gene3D" id="3.40.640.10">
    <property type="entry name" value="Type I PLP-dependent aspartate aminotransferase-like (Major domain)"/>
    <property type="match status" value="2"/>
</dbReference>
<dbReference type="HAMAP" id="MF_00711">
    <property type="entry name" value="GcvP"/>
    <property type="match status" value="1"/>
</dbReference>
<dbReference type="InterPro" id="IPR003437">
    <property type="entry name" value="GcvP"/>
</dbReference>
<dbReference type="InterPro" id="IPR049316">
    <property type="entry name" value="GDC-P_C"/>
</dbReference>
<dbReference type="InterPro" id="IPR049315">
    <property type="entry name" value="GDC-P_N"/>
</dbReference>
<dbReference type="InterPro" id="IPR020581">
    <property type="entry name" value="GDC_P"/>
</dbReference>
<dbReference type="InterPro" id="IPR015424">
    <property type="entry name" value="PyrdxlP-dep_Trfase"/>
</dbReference>
<dbReference type="InterPro" id="IPR015421">
    <property type="entry name" value="PyrdxlP-dep_Trfase_major"/>
</dbReference>
<dbReference type="InterPro" id="IPR015422">
    <property type="entry name" value="PyrdxlP-dep_Trfase_small"/>
</dbReference>
<dbReference type="NCBIfam" id="TIGR00461">
    <property type="entry name" value="gcvP"/>
    <property type="match status" value="1"/>
</dbReference>
<dbReference type="NCBIfam" id="NF003346">
    <property type="entry name" value="PRK04366.1"/>
    <property type="match status" value="1"/>
</dbReference>
<dbReference type="PANTHER" id="PTHR11773:SF1">
    <property type="entry name" value="GLYCINE DEHYDROGENASE (DECARBOXYLATING), MITOCHONDRIAL"/>
    <property type="match status" value="1"/>
</dbReference>
<dbReference type="PANTHER" id="PTHR11773">
    <property type="entry name" value="GLYCINE DEHYDROGENASE, DECARBOXYLATING"/>
    <property type="match status" value="1"/>
</dbReference>
<dbReference type="Pfam" id="PF21478">
    <property type="entry name" value="GcvP2_C"/>
    <property type="match status" value="1"/>
</dbReference>
<dbReference type="Pfam" id="PF02347">
    <property type="entry name" value="GDC-P"/>
    <property type="match status" value="2"/>
</dbReference>
<dbReference type="SUPFAM" id="SSF53383">
    <property type="entry name" value="PLP-dependent transferases"/>
    <property type="match status" value="2"/>
</dbReference>
<organism>
    <name type="scientific">Prochlorococcus marinus (strain MIT 9303)</name>
    <dbReference type="NCBI Taxonomy" id="59922"/>
    <lineage>
        <taxon>Bacteria</taxon>
        <taxon>Bacillati</taxon>
        <taxon>Cyanobacteriota</taxon>
        <taxon>Cyanophyceae</taxon>
        <taxon>Synechococcales</taxon>
        <taxon>Prochlorococcaceae</taxon>
        <taxon>Prochlorococcus</taxon>
    </lineage>
</organism>
<sequence>MTLLEQRAVEASSIQSSPFLVRHIGPSFEDQQQMLLELGHRDLQSFVAAVVPPDILETTAPTSSLPEGCGEVQAMEELRLIAAANRVRRSLIGLGYYGTATPALIQRQVLENPAWYTAYTPYQAEISQGRLEALFNFQTLISELTGLPIANASLLDEGTAAAEAMSLSFAICKRPQAHRFLVDAEVLPQTLAVLRTRAEPLGIHLEVAEPMTFQFDAEVFGVLLQLPGRSGRLWDPTTSIQAAHEVGALATVAIDPLAQVLIAPVAEFGADIAVGSVQRFGVPMAFGGPHAAFFATLEIFKRQVPGRLVGQSVDAEGQPALRLALQTREQHIRRDKATSNICTAQVLLAVMASFYAVHHGPDGLAAIARRVLLLRAQLERGLHQLGYPVQSIARFDTIEVICREAPAVHQAAALAGFNLRVLPLGVAPEAAHGFGISFDELSTDQELKSILQILAEAAGQPVPVLEDLGNPHLEELVGLPLRQRPWLQQQVFHRYRSETELLRYLQRLVGRDLSLVHGMIPLGSCTMKLNAAAELIPISWREFAALHPFAPQDQCHGYQRLVQDLEHWFAEITGFAGVSLQPNAGSQGELAGLLVIRAWHHSRGEQQRDVCLIPTSAHGTNPATCVMAGLRVVPVACDAEGNVDLNDLASKAEAHAPQLAALMVTYPSTHGVFEPQIREICELVHGHGGQVYLDGANLNAQIGFCRPGTYGADVCHINLHKTFCIPHGGGGPGVGPIAVAAHLMPFLPGHPLAACGGEQGIGAISAAPWGSAGILPISWMYLRMMGAEGLRQASAVALLSANYLAHRLHPHYPVLFRGQAGLVAHECILDLRPLKRSAGLEVDDIAKRLMDYGFHAPTVSWPVAGTVMVEPTESESLEELNRFCDAMIAIREETAAIESGQIDPQNNPLRRAPHTLAAVTAEVWDRPYSRAEAAFPLAEQRQSKFWPAVSRIDNAYGDRNLLCSCPSVEELADNSVLKPPLV</sequence>
<feature type="chain" id="PRO_1000147968" description="Glycine dehydrogenase (decarboxylating)">
    <location>
        <begin position="1"/>
        <end position="982"/>
    </location>
</feature>
<feature type="modified residue" description="N6-(pyridoxal phosphate)lysine" evidence="1">
    <location>
        <position position="721"/>
    </location>
</feature>
<evidence type="ECO:0000255" key="1">
    <source>
        <dbReference type="HAMAP-Rule" id="MF_00711"/>
    </source>
</evidence>
<comment type="function">
    <text evidence="1">The glycine cleavage system catalyzes the degradation of glycine. The P protein binds the alpha-amino group of glycine through its pyridoxal phosphate cofactor; CO(2) is released and the remaining methylamine moiety is then transferred to the lipoamide cofactor of the H protein.</text>
</comment>
<comment type="catalytic activity">
    <reaction evidence="1">
        <text>N(6)-[(R)-lipoyl]-L-lysyl-[glycine-cleavage complex H protein] + glycine + H(+) = N(6)-[(R)-S(8)-aminomethyldihydrolipoyl]-L-lysyl-[glycine-cleavage complex H protein] + CO2</text>
        <dbReference type="Rhea" id="RHEA:24304"/>
        <dbReference type="Rhea" id="RHEA-COMP:10494"/>
        <dbReference type="Rhea" id="RHEA-COMP:10495"/>
        <dbReference type="ChEBI" id="CHEBI:15378"/>
        <dbReference type="ChEBI" id="CHEBI:16526"/>
        <dbReference type="ChEBI" id="CHEBI:57305"/>
        <dbReference type="ChEBI" id="CHEBI:83099"/>
        <dbReference type="ChEBI" id="CHEBI:83143"/>
        <dbReference type="EC" id="1.4.4.2"/>
    </reaction>
</comment>
<comment type="cofactor">
    <cofactor evidence="1">
        <name>pyridoxal 5'-phosphate</name>
        <dbReference type="ChEBI" id="CHEBI:597326"/>
    </cofactor>
</comment>
<comment type="subunit">
    <text evidence="1">The glycine cleavage system is composed of four proteins: P, T, L and H.</text>
</comment>
<comment type="similarity">
    <text evidence="1">Belongs to the GcvP family.</text>
</comment>
<accession>A2CDR0</accession>
<gene>
    <name evidence="1" type="primary">gcvP</name>
    <name type="ordered locus">P9303_28901</name>
</gene>